<sequence length="447" mass="50715">MIKIYDTMTRSLRDFVPLTENTVNMYVCGPTVYNYIHIGNARSTVAFDTIRRYFEYRGYTVNYISNFTDVDDKIIKAANEVGISTKELSDKFITAFMEDTAQLGIKPATQNPRVINYMDEIIAFVSILIDKGFAYVSEGDVYFRVTKSNNYAKLANKTLEDLEIGASGRTDAETDRKEDPLDFALWKAAKEGEISWESPWGPGRPGWHIECSVMATEILGDTIDIHGGGADLEFPHHTNEIAQSEAKTGKTFANYWMHNGFVNVDNEKMSKSLGNFVTVHDMLKTVDGQVLRFFLATQQYRKPINFTEKAIHDAEVNLKYLKNTHSLPLTEEVSQAELQAYLDAFQAAMDDDFNTANGVTVLFDMAKWINSGNYDETVKDAFEKILQVFGIVFEEETLDEDIEKLIEERQAARANKDFATADRIRDELAAQGIKLLDTKEGVRWTRD</sequence>
<name>SYC_STRT1</name>
<protein>
    <recommendedName>
        <fullName evidence="1">Cysteine--tRNA ligase</fullName>
        <ecNumber evidence="1">6.1.1.16</ecNumber>
    </recommendedName>
    <alternativeName>
        <fullName evidence="1">Cysteinyl-tRNA synthetase</fullName>
        <shortName evidence="1">CysRS</shortName>
    </alternativeName>
</protein>
<feature type="chain" id="PRO_0000159499" description="Cysteine--tRNA ligase">
    <location>
        <begin position="1"/>
        <end position="447"/>
    </location>
</feature>
<feature type="short sequence motif" description="'HIGH' region">
    <location>
        <begin position="30"/>
        <end position="40"/>
    </location>
</feature>
<feature type="short sequence motif" description="'KMSKS' region">
    <location>
        <begin position="268"/>
        <end position="272"/>
    </location>
</feature>
<feature type="binding site" evidence="1">
    <location>
        <position position="28"/>
    </location>
    <ligand>
        <name>Zn(2+)</name>
        <dbReference type="ChEBI" id="CHEBI:29105"/>
    </ligand>
</feature>
<feature type="binding site" evidence="1">
    <location>
        <position position="211"/>
    </location>
    <ligand>
        <name>Zn(2+)</name>
        <dbReference type="ChEBI" id="CHEBI:29105"/>
    </ligand>
</feature>
<feature type="binding site" evidence="1">
    <location>
        <position position="236"/>
    </location>
    <ligand>
        <name>Zn(2+)</name>
        <dbReference type="ChEBI" id="CHEBI:29105"/>
    </ligand>
</feature>
<feature type="binding site" evidence="1">
    <location>
        <position position="240"/>
    </location>
    <ligand>
        <name>Zn(2+)</name>
        <dbReference type="ChEBI" id="CHEBI:29105"/>
    </ligand>
</feature>
<feature type="binding site" evidence="1">
    <location>
        <position position="271"/>
    </location>
    <ligand>
        <name>ATP</name>
        <dbReference type="ChEBI" id="CHEBI:30616"/>
    </ligand>
</feature>
<reference key="1">
    <citation type="journal article" date="2004" name="Nat. Biotechnol.">
        <title>Complete sequence and comparative genome analysis of the dairy bacterium Streptococcus thermophilus.</title>
        <authorList>
            <person name="Bolotin A."/>
            <person name="Quinquis B."/>
            <person name="Renault P."/>
            <person name="Sorokin A."/>
            <person name="Ehrlich S.D."/>
            <person name="Kulakauskas S."/>
            <person name="Lapidus A."/>
            <person name="Goltsman E."/>
            <person name="Mazur M."/>
            <person name="Pusch G.D."/>
            <person name="Fonstein M."/>
            <person name="Overbeek R."/>
            <person name="Kyprides N."/>
            <person name="Purnelle B."/>
            <person name="Prozzi D."/>
            <person name="Ngui K."/>
            <person name="Masuy D."/>
            <person name="Hancy F."/>
            <person name="Burteau S."/>
            <person name="Boutry M."/>
            <person name="Delcour J."/>
            <person name="Goffeau A."/>
            <person name="Hols P."/>
        </authorList>
    </citation>
    <scope>NUCLEOTIDE SEQUENCE [LARGE SCALE GENOMIC DNA]</scope>
    <source>
        <strain>CNRZ 1066</strain>
    </source>
</reference>
<evidence type="ECO:0000255" key="1">
    <source>
        <dbReference type="HAMAP-Rule" id="MF_00041"/>
    </source>
</evidence>
<dbReference type="EC" id="6.1.1.16" evidence="1"/>
<dbReference type="EMBL" id="CP000024">
    <property type="protein sequence ID" value="AAV61700.1"/>
    <property type="molecule type" value="Genomic_DNA"/>
</dbReference>
<dbReference type="RefSeq" id="WP_011225305.1">
    <property type="nucleotide sequence ID" value="NC_006449.1"/>
</dbReference>
<dbReference type="SMR" id="Q5M1W6"/>
<dbReference type="GeneID" id="66898014"/>
<dbReference type="KEGG" id="stc:str0084"/>
<dbReference type="HOGENOM" id="CLU_013528_0_1_9"/>
<dbReference type="GO" id="GO:0005829">
    <property type="term" value="C:cytosol"/>
    <property type="evidence" value="ECO:0007669"/>
    <property type="project" value="TreeGrafter"/>
</dbReference>
<dbReference type="GO" id="GO:0005524">
    <property type="term" value="F:ATP binding"/>
    <property type="evidence" value="ECO:0007669"/>
    <property type="project" value="UniProtKB-UniRule"/>
</dbReference>
<dbReference type="GO" id="GO:0004817">
    <property type="term" value="F:cysteine-tRNA ligase activity"/>
    <property type="evidence" value="ECO:0007669"/>
    <property type="project" value="UniProtKB-UniRule"/>
</dbReference>
<dbReference type="GO" id="GO:0008270">
    <property type="term" value="F:zinc ion binding"/>
    <property type="evidence" value="ECO:0007669"/>
    <property type="project" value="UniProtKB-UniRule"/>
</dbReference>
<dbReference type="GO" id="GO:0006423">
    <property type="term" value="P:cysteinyl-tRNA aminoacylation"/>
    <property type="evidence" value="ECO:0007669"/>
    <property type="project" value="UniProtKB-UniRule"/>
</dbReference>
<dbReference type="CDD" id="cd00672">
    <property type="entry name" value="CysRS_core"/>
    <property type="match status" value="1"/>
</dbReference>
<dbReference type="FunFam" id="3.40.50.620:FF:000130">
    <property type="entry name" value="Cysteine--tRNA ligase"/>
    <property type="match status" value="1"/>
</dbReference>
<dbReference type="Gene3D" id="1.20.120.640">
    <property type="entry name" value="Anticodon-binding domain of a subclass of class I aminoacyl-tRNA synthetases"/>
    <property type="match status" value="1"/>
</dbReference>
<dbReference type="Gene3D" id="3.40.50.620">
    <property type="entry name" value="HUPs"/>
    <property type="match status" value="1"/>
</dbReference>
<dbReference type="HAMAP" id="MF_00041">
    <property type="entry name" value="Cys_tRNA_synth"/>
    <property type="match status" value="1"/>
</dbReference>
<dbReference type="InterPro" id="IPR015803">
    <property type="entry name" value="Cys-tRNA-ligase"/>
</dbReference>
<dbReference type="InterPro" id="IPR015273">
    <property type="entry name" value="Cys-tRNA-synt_Ia_DALR"/>
</dbReference>
<dbReference type="InterPro" id="IPR024909">
    <property type="entry name" value="Cys-tRNA/MSH_ligase"/>
</dbReference>
<dbReference type="InterPro" id="IPR056411">
    <property type="entry name" value="CysS_C"/>
</dbReference>
<dbReference type="InterPro" id="IPR014729">
    <property type="entry name" value="Rossmann-like_a/b/a_fold"/>
</dbReference>
<dbReference type="InterPro" id="IPR032678">
    <property type="entry name" value="tRNA-synt_1_cat_dom"/>
</dbReference>
<dbReference type="InterPro" id="IPR009080">
    <property type="entry name" value="tRNAsynth_Ia_anticodon-bd"/>
</dbReference>
<dbReference type="NCBIfam" id="TIGR00435">
    <property type="entry name" value="cysS"/>
    <property type="match status" value="1"/>
</dbReference>
<dbReference type="PANTHER" id="PTHR10890:SF3">
    <property type="entry name" value="CYSTEINE--TRNA LIGASE, CYTOPLASMIC"/>
    <property type="match status" value="1"/>
</dbReference>
<dbReference type="PANTHER" id="PTHR10890">
    <property type="entry name" value="CYSTEINYL-TRNA SYNTHETASE"/>
    <property type="match status" value="1"/>
</dbReference>
<dbReference type="Pfam" id="PF23493">
    <property type="entry name" value="CysS_C"/>
    <property type="match status" value="1"/>
</dbReference>
<dbReference type="Pfam" id="PF09190">
    <property type="entry name" value="DALR_2"/>
    <property type="match status" value="1"/>
</dbReference>
<dbReference type="Pfam" id="PF01406">
    <property type="entry name" value="tRNA-synt_1e"/>
    <property type="match status" value="1"/>
</dbReference>
<dbReference type="PRINTS" id="PR00983">
    <property type="entry name" value="TRNASYNTHCYS"/>
</dbReference>
<dbReference type="SMART" id="SM00840">
    <property type="entry name" value="DALR_2"/>
    <property type="match status" value="1"/>
</dbReference>
<dbReference type="SUPFAM" id="SSF47323">
    <property type="entry name" value="Anticodon-binding domain of a subclass of class I aminoacyl-tRNA synthetases"/>
    <property type="match status" value="1"/>
</dbReference>
<dbReference type="SUPFAM" id="SSF52374">
    <property type="entry name" value="Nucleotidylyl transferase"/>
    <property type="match status" value="1"/>
</dbReference>
<organism>
    <name type="scientific">Streptococcus thermophilus (strain CNRZ 1066)</name>
    <dbReference type="NCBI Taxonomy" id="299768"/>
    <lineage>
        <taxon>Bacteria</taxon>
        <taxon>Bacillati</taxon>
        <taxon>Bacillota</taxon>
        <taxon>Bacilli</taxon>
        <taxon>Lactobacillales</taxon>
        <taxon>Streptococcaceae</taxon>
        <taxon>Streptococcus</taxon>
    </lineage>
</organism>
<accession>Q5M1W6</accession>
<keyword id="KW-0030">Aminoacyl-tRNA synthetase</keyword>
<keyword id="KW-0067">ATP-binding</keyword>
<keyword id="KW-0963">Cytoplasm</keyword>
<keyword id="KW-0436">Ligase</keyword>
<keyword id="KW-0479">Metal-binding</keyword>
<keyword id="KW-0547">Nucleotide-binding</keyword>
<keyword id="KW-0648">Protein biosynthesis</keyword>
<keyword id="KW-0862">Zinc</keyword>
<gene>
    <name evidence="1" type="primary">cysS</name>
    <name type="ordered locus">str0084</name>
</gene>
<proteinExistence type="inferred from homology"/>
<comment type="catalytic activity">
    <reaction evidence="1">
        <text>tRNA(Cys) + L-cysteine + ATP = L-cysteinyl-tRNA(Cys) + AMP + diphosphate</text>
        <dbReference type="Rhea" id="RHEA:17773"/>
        <dbReference type="Rhea" id="RHEA-COMP:9661"/>
        <dbReference type="Rhea" id="RHEA-COMP:9679"/>
        <dbReference type="ChEBI" id="CHEBI:30616"/>
        <dbReference type="ChEBI" id="CHEBI:33019"/>
        <dbReference type="ChEBI" id="CHEBI:35235"/>
        <dbReference type="ChEBI" id="CHEBI:78442"/>
        <dbReference type="ChEBI" id="CHEBI:78517"/>
        <dbReference type="ChEBI" id="CHEBI:456215"/>
        <dbReference type="EC" id="6.1.1.16"/>
    </reaction>
</comment>
<comment type="cofactor">
    <cofactor evidence="1">
        <name>Zn(2+)</name>
        <dbReference type="ChEBI" id="CHEBI:29105"/>
    </cofactor>
    <text evidence="1">Binds 1 zinc ion per subunit.</text>
</comment>
<comment type="subunit">
    <text evidence="1">Monomer.</text>
</comment>
<comment type="subcellular location">
    <subcellularLocation>
        <location evidence="1">Cytoplasm</location>
    </subcellularLocation>
</comment>
<comment type="similarity">
    <text evidence="1">Belongs to the class-I aminoacyl-tRNA synthetase family.</text>
</comment>